<comment type="function">
    <text evidence="1">Protease subunit of a proteasome-like degradation complex believed to be a general protein degrading machinery.</text>
</comment>
<comment type="catalytic activity">
    <reaction evidence="1">
        <text>ATP-dependent cleavage of peptide bonds with broad specificity.</text>
        <dbReference type="EC" id="3.4.25.2"/>
    </reaction>
</comment>
<comment type="activity regulation">
    <text evidence="1">Allosterically activated by HslU binding.</text>
</comment>
<comment type="subunit">
    <text evidence="1">A double ring-shaped homohexamer of HslV is capped on each side by a ring-shaped HslU homohexamer. The assembly of the HslU/HslV complex is dependent on binding of ATP.</text>
</comment>
<comment type="subcellular location">
    <subcellularLocation>
        <location evidence="1">Cytoplasm</location>
    </subcellularLocation>
</comment>
<comment type="similarity">
    <text evidence="1">Belongs to the peptidase T1B family. HslV subfamily.</text>
</comment>
<dbReference type="EC" id="3.4.25.2" evidence="1"/>
<dbReference type="EMBL" id="CP000478">
    <property type="protein sequence ID" value="ABK15769.1"/>
    <property type="molecule type" value="Genomic_DNA"/>
</dbReference>
<dbReference type="RefSeq" id="WP_011696942.1">
    <property type="nucleotide sequence ID" value="NC_008554.1"/>
</dbReference>
<dbReference type="SMR" id="A0LEB7"/>
<dbReference type="FunCoup" id="A0LEB7">
    <property type="interactions" value="372"/>
</dbReference>
<dbReference type="STRING" id="335543.Sfum_0066"/>
<dbReference type="MEROPS" id="T01.007"/>
<dbReference type="KEGG" id="sfu:Sfum_0066"/>
<dbReference type="eggNOG" id="COG5405">
    <property type="taxonomic scope" value="Bacteria"/>
</dbReference>
<dbReference type="HOGENOM" id="CLU_093872_1_0_7"/>
<dbReference type="InParanoid" id="A0LEB7"/>
<dbReference type="OrthoDB" id="9804884at2"/>
<dbReference type="Proteomes" id="UP000001784">
    <property type="component" value="Chromosome"/>
</dbReference>
<dbReference type="GO" id="GO:0009376">
    <property type="term" value="C:HslUV protease complex"/>
    <property type="evidence" value="ECO:0007669"/>
    <property type="project" value="UniProtKB-UniRule"/>
</dbReference>
<dbReference type="GO" id="GO:0005839">
    <property type="term" value="C:proteasome core complex"/>
    <property type="evidence" value="ECO:0007669"/>
    <property type="project" value="InterPro"/>
</dbReference>
<dbReference type="GO" id="GO:0046872">
    <property type="term" value="F:metal ion binding"/>
    <property type="evidence" value="ECO:0007669"/>
    <property type="project" value="UniProtKB-KW"/>
</dbReference>
<dbReference type="GO" id="GO:0004298">
    <property type="term" value="F:threonine-type endopeptidase activity"/>
    <property type="evidence" value="ECO:0007669"/>
    <property type="project" value="UniProtKB-KW"/>
</dbReference>
<dbReference type="GO" id="GO:0051603">
    <property type="term" value="P:proteolysis involved in protein catabolic process"/>
    <property type="evidence" value="ECO:0007669"/>
    <property type="project" value="InterPro"/>
</dbReference>
<dbReference type="CDD" id="cd01913">
    <property type="entry name" value="protease_HslV"/>
    <property type="match status" value="1"/>
</dbReference>
<dbReference type="Gene3D" id="3.60.20.10">
    <property type="entry name" value="Glutamine Phosphoribosylpyrophosphate, subunit 1, domain 1"/>
    <property type="match status" value="1"/>
</dbReference>
<dbReference type="HAMAP" id="MF_00248">
    <property type="entry name" value="HslV"/>
    <property type="match status" value="1"/>
</dbReference>
<dbReference type="InterPro" id="IPR022281">
    <property type="entry name" value="ATP-dep_Prtase_HsIV_su"/>
</dbReference>
<dbReference type="InterPro" id="IPR029055">
    <property type="entry name" value="Ntn_hydrolases_N"/>
</dbReference>
<dbReference type="InterPro" id="IPR001353">
    <property type="entry name" value="Proteasome_sua/b"/>
</dbReference>
<dbReference type="InterPro" id="IPR023333">
    <property type="entry name" value="Proteasome_suB-type"/>
</dbReference>
<dbReference type="NCBIfam" id="TIGR03692">
    <property type="entry name" value="ATP_dep_HslV"/>
    <property type="match status" value="1"/>
</dbReference>
<dbReference type="NCBIfam" id="NF003964">
    <property type="entry name" value="PRK05456.1"/>
    <property type="match status" value="1"/>
</dbReference>
<dbReference type="PANTHER" id="PTHR32194:SF0">
    <property type="entry name" value="ATP-DEPENDENT PROTEASE SUBUNIT HSLV"/>
    <property type="match status" value="1"/>
</dbReference>
<dbReference type="PANTHER" id="PTHR32194">
    <property type="entry name" value="METALLOPROTEASE TLDD"/>
    <property type="match status" value="1"/>
</dbReference>
<dbReference type="Pfam" id="PF00227">
    <property type="entry name" value="Proteasome"/>
    <property type="match status" value="1"/>
</dbReference>
<dbReference type="PIRSF" id="PIRSF039093">
    <property type="entry name" value="HslV"/>
    <property type="match status" value="1"/>
</dbReference>
<dbReference type="SUPFAM" id="SSF56235">
    <property type="entry name" value="N-terminal nucleophile aminohydrolases (Ntn hydrolases)"/>
    <property type="match status" value="1"/>
</dbReference>
<dbReference type="PROSITE" id="PS51476">
    <property type="entry name" value="PROTEASOME_BETA_2"/>
    <property type="match status" value="1"/>
</dbReference>
<feature type="chain" id="PRO_0000336798" description="ATP-dependent protease subunit HslV">
    <location>
        <begin position="1"/>
        <end position="179"/>
    </location>
</feature>
<feature type="active site" evidence="1">
    <location>
        <position position="9"/>
    </location>
</feature>
<feature type="binding site" evidence="1">
    <location>
        <position position="164"/>
    </location>
    <ligand>
        <name>Na(+)</name>
        <dbReference type="ChEBI" id="CHEBI:29101"/>
    </ligand>
</feature>
<feature type="binding site" evidence="1">
    <location>
        <position position="167"/>
    </location>
    <ligand>
        <name>Na(+)</name>
        <dbReference type="ChEBI" id="CHEBI:29101"/>
    </ligand>
</feature>
<feature type="binding site" evidence="1">
    <location>
        <position position="170"/>
    </location>
    <ligand>
        <name>Na(+)</name>
        <dbReference type="ChEBI" id="CHEBI:29101"/>
    </ligand>
</feature>
<evidence type="ECO:0000255" key="1">
    <source>
        <dbReference type="HAMAP-Rule" id="MF_00248"/>
    </source>
</evidence>
<reference key="1">
    <citation type="submission" date="2006-10" db="EMBL/GenBank/DDBJ databases">
        <title>Complete sequence of Syntrophobacter fumaroxidans MPOB.</title>
        <authorList>
            <consortium name="US DOE Joint Genome Institute"/>
            <person name="Copeland A."/>
            <person name="Lucas S."/>
            <person name="Lapidus A."/>
            <person name="Barry K."/>
            <person name="Detter J.C."/>
            <person name="Glavina del Rio T."/>
            <person name="Hammon N."/>
            <person name="Israni S."/>
            <person name="Pitluck S."/>
            <person name="Goltsman E.G."/>
            <person name="Martinez M."/>
            <person name="Schmutz J."/>
            <person name="Larimer F."/>
            <person name="Land M."/>
            <person name="Hauser L."/>
            <person name="Kyrpides N."/>
            <person name="Kim E."/>
            <person name="Boone D.R."/>
            <person name="Brockman F."/>
            <person name="Culley D."/>
            <person name="Ferry J."/>
            <person name="Gunsalus R."/>
            <person name="McInerney M.J."/>
            <person name="Morrison M."/>
            <person name="Plugge C."/>
            <person name="Rohlin L."/>
            <person name="Scholten J."/>
            <person name="Sieber J."/>
            <person name="Stams A.J.M."/>
            <person name="Worm P."/>
            <person name="Henstra A.M."/>
            <person name="Richardson P."/>
        </authorList>
    </citation>
    <scope>NUCLEOTIDE SEQUENCE [LARGE SCALE GENOMIC DNA]</scope>
    <source>
        <strain>DSM 10017 / MPOB</strain>
    </source>
</reference>
<protein>
    <recommendedName>
        <fullName evidence="1">ATP-dependent protease subunit HslV</fullName>
        <ecNumber evidence="1">3.4.25.2</ecNumber>
    </recommendedName>
</protein>
<proteinExistence type="inferred from homology"/>
<accession>A0LEB7</accession>
<organism>
    <name type="scientific">Syntrophobacter fumaroxidans (strain DSM 10017 / MPOB)</name>
    <dbReference type="NCBI Taxonomy" id="335543"/>
    <lineage>
        <taxon>Bacteria</taxon>
        <taxon>Pseudomonadati</taxon>
        <taxon>Thermodesulfobacteriota</taxon>
        <taxon>Syntrophobacteria</taxon>
        <taxon>Syntrophobacterales</taxon>
        <taxon>Syntrophobacteraceae</taxon>
        <taxon>Syntrophobacter</taxon>
    </lineage>
</organism>
<sequence length="179" mass="19519">MGETVVHGTTVLAIKKDGKVVMAGDGQVTMGDTVVKHQAKKVRKMYHDRILTGFSGSTADAFTLFERLEGKLEQYNGNLKRAAVELAKDWRMDRALRRLEALLVAADRNDCFILSGTGDVIEPDDGLAAVGSGAPYALAAARALIRHTGMSIREIAEEAMNIAASICIYTNREFTFEEL</sequence>
<name>HSLV_SYNFM</name>
<gene>
    <name evidence="1" type="primary">hslV</name>
    <name type="ordered locus">Sfum_0066</name>
</gene>
<keyword id="KW-0021">Allosteric enzyme</keyword>
<keyword id="KW-0963">Cytoplasm</keyword>
<keyword id="KW-0378">Hydrolase</keyword>
<keyword id="KW-0479">Metal-binding</keyword>
<keyword id="KW-0645">Protease</keyword>
<keyword id="KW-1185">Reference proteome</keyword>
<keyword id="KW-0915">Sodium</keyword>
<keyword id="KW-0888">Threonine protease</keyword>